<accession>C1CFB5</accession>
<dbReference type="EC" id="3.6.1.1" evidence="1"/>
<dbReference type="EMBL" id="CP000919">
    <property type="protein sequence ID" value="ACO18653.1"/>
    <property type="molecule type" value="Genomic_DNA"/>
</dbReference>
<dbReference type="RefSeq" id="WP_000036043.1">
    <property type="nucleotide sequence ID" value="NC_012466.1"/>
</dbReference>
<dbReference type="SMR" id="C1CFB5"/>
<dbReference type="KEGG" id="sjj:SPJ_1438"/>
<dbReference type="HOGENOM" id="CLU_025243_0_1_9"/>
<dbReference type="Proteomes" id="UP000002206">
    <property type="component" value="Chromosome"/>
</dbReference>
<dbReference type="GO" id="GO:0005737">
    <property type="term" value="C:cytoplasm"/>
    <property type="evidence" value="ECO:0007669"/>
    <property type="project" value="UniProtKB-SubCell"/>
</dbReference>
<dbReference type="GO" id="GO:0004427">
    <property type="term" value="F:inorganic diphosphate phosphatase activity"/>
    <property type="evidence" value="ECO:0007669"/>
    <property type="project" value="UniProtKB-UniRule"/>
</dbReference>
<dbReference type="GO" id="GO:0030145">
    <property type="term" value="F:manganese ion binding"/>
    <property type="evidence" value="ECO:0007669"/>
    <property type="project" value="UniProtKB-UniRule"/>
</dbReference>
<dbReference type="FunFam" id="3.10.310.20:FF:000001">
    <property type="entry name" value="Probable manganese-dependent inorganic pyrophosphatase"/>
    <property type="match status" value="1"/>
</dbReference>
<dbReference type="FunFam" id="3.90.1640.10:FF:000001">
    <property type="entry name" value="Probable manganese-dependent inorganic pyrophosphatase"/>
    <property type="match status" value="1"/>
</dbReference>
<dbReference type="Gene3D" id="3.10.310.20">
    <property type="entry name" value="DHHA2 domain"/>
    <property type="match status" value="1"/>
</dbReference>
<dbReference type="Gene3D" id="3.90.1640.10">
    <property type="entry name" value="inorganic pyrophosphatase (n-terminal core)"/>
    <property type="match status" value="1"/>
</dbReference>
<dbReference type="HAMAP" id="MF_00207">
    <property type="entry name" value="PPase_C"/>
    <property type="match status" value="1"/>
</dbReference>
<dbReference type="InterPro" id="IPR001667">
    <property type="entry name" value="DDH_dom"/>
</dbReference>
<dbReference type="InterPro" id="IPR038763">
    <property type="entry name" value="DHH_sf"/>
</dbReference>
<dbReference type="InterPro" id="IPR004097">
    <property type="entry name" value="DHHA2"/>
</dbReference>
<dbReference type="InterPro" id="IPR038222">
    <property type="entry name" value="DHHA2_dom_sf"/>
</dbReference>
<dbReference type="InterPro" id="IPR022934">
    <property type="entry name" value="Mn-dep_inorganic_PyrPase"/>
</dbReference>
<dbReference type="InterPro" id="IPR051319">
    <property type="entry name" value="Oligoribo/pAp-PDE_c-di-AMP_PDE"/>
</dbReference>
<dbReference type="NCBIfam" id="NF003877">
    <property type="entry name" value="PRK05427.1"/>
    <property type="match status" value="1"/>
</dbReference>
<dbReference type="PANTHER" id="PTHR47618">
    <property type="entry name" value="BIFUNCTIONAL OLIGORIBONUCLEASE AND PAP PHOSPHATASE NRNA"/>
    <property type="match status" value="1"/>
</dbReference>
<dbReference type="PANTHER" id="PTHR47618:SF1">
    <property type="entry name" value="BIFUNCTIONAL OLIGORIBONUCLEASE AND PAP PHOSPHATASE NRNA"/>
    <property type="match status" value="1"/>
</dbReference>
<dbReference type="Pfam" id="PF01368">
    <property type="entry name" value="DHH"/>
    <property type="match status" value="1"/>
</dbReference>
<dbReference type="Pfam" id="PF02833">
    <property type="entry name" value="DHHA2"/>
    <property type="match status" value="1"/>
</dbReference>
<dbReference type="SMART" id="SM01131">
    <property type="entry name" value="DHHA2"/>
    <property type="match status" value="1"/>
</dbReference>
<dbReference type="SUPFAM" id="SSF64182">
    <property type="entry name" value="DHH phosphoesterases"/>
    <property type="match status" value="1"/>
</dbReference>
<protein>
    <recommendedName>
        <fullName evidence="1">Probable manganese-dependent inorganic pyrophosphatase</fullName>
        <ecNumber evidence="1">3.6.1.1</ecNumber>
    </recommendedName>
    <alternativeName>
        <fullName evidence="1">Pyrophosphate phospho-hydrolase</fullName>
        <shortName evidence="1">PPase</shortName>
    </alternativeName>
</protein>
<gene>
    <name evidence="1" type="primary">ppaC</name>
    <name type="ordered locus">SPJ_1438</name>
</gene>
<organism>
    <name type="scientific">Streptococcus pneumoniae (strain JJA)</name>
    <dbReference type="NCBI Taxonomy" id="488222"/>
    <lineage>
        <taxon>Bacteria</taxon>
        <taxon>Bacillati</taxon>
        <taxon>Bacillota</taxon>
        <taxon>Bacilli</taxon>
        <taxon>Lactobacillales</taxon>
        <taxon>Streptococcaceae</taxon>
        <taxon>Streptococcus</taxon>
    </lineage>
</organism>
<name>PPAC_STRZJ</name>
<keyword id="KW-0963">Cytoplasm</keyword>
<keyword id="KW-0378">Hydrolase</keyword>
<keyword id="KW-0464">Manganese</keyword>
<keyword id="KW-0479">Metal-binding</keyword>
<sequence length="311" mass="33479">MSKILVFGHQNPDSDAIGSSVAFAYLAKEAYGLDTEAVALGTPNEETAFVLNYFGVEAPRVITSAKAEGAEQVILTDHNEFQQSVSDIAEVEVYGVVDHHRVANFETASPLYMRLEPVGSASSIVYRMFKEHGVAVPKEIAGLMLSGLISDTLLLKSPTTHPTDKIIAPELAELAGVNLEEYGLAMLKAGTNLASKSAEELIDIDAKTFELNGNNVRVAQVNTVDIAEVLERQAEIEAAMQAANESNGYSDFVLMITDIVNSNSEILALGANMDKVEAAFNFKLENNHAFLAGAVSRKKQVVPQLTESFNA</sequence>
<evidence type="ECO:0000255" key="1">
    <source>
        <dbReference type="HAMAP-Rule" id="MF_00207"/>
    </source>
</evidence>
<comment type="catalytic activity">
    <reaction evidence="1">
        <text>diphosphate + H2O = 2 phosphate + H(+)</text>
        <dbReference type="Rhea" id="RHEA:24576"/>
        <dbReference type="ChEBI" id="CHEBI:15377"/>
        <dbReference type="ChEBI" id="CHEBI:15378"/>
        <dbReference type="ChEBI" id="CHEBI:33019"/>
        <dbReference type="ChEBI" id="CHEBI:43474"/>
        <dbReference type="EC" id="3.6.1.1"/>
    </reaction>
</comment>
<comment type="cofactor">
    <cofactor evidence="1">
        <name>Mn(2+)</name>
        <dbReference type="ChEBI" id="CHEBI:29035"/>
    </cofactor>
    <text evidence="1">Binds 2 manganese ions per subunit.</text>
</comment>
<comment type="subcellular location">
    <subcellularLocation>
        <location evidence="1">Cytoplasm</location>
    </subcellularLocation>
</comment>
<comment type="similarity">
    <text evidence="1">Belongs to the PPase class C family.</text>
</comment>
<reference key="1">
    <citation type="journal article" date="2010" name="Genome Biol.">
        <title>Structure and dynamics of the pan-genome of Streptococcus pneumoniae and closely related species.</title>
        <authorList>
            <person name="Donati C."/>
            <person name="Hiller N.L."/>
            <person name="Tettelin H."/>
            <person name="Muzzi A."/>
            <person name="Croucher N.J."/>
            <person name="Angiuoli S.V."/>
            <person name="Oggioni M."/>
            <person name="Dunning Hotopp J.C."/>
            <person name="Hu F.Z."/>
            <person name="Riley D.R."/>
            <person name="Covacci A."/>
            <person name="Mitchell T.J."/>
            <person name="Bentley S.D."/>
            <person name="Kilian M."/>
            <person name="Ehrlich G.D."/>
            <person name="Rappuoli R."/>
            <person name="Moxon E.R."/>
            <person name="Masignani V."/>
        </authorList>
    </citation>
    <scope>NUCLEOTIDE SEQUENCE [LARGE SCALE GENOMIC DNA]</scope>
    <source>
        <strain>JJA</strain>
    </source>
</reference>
<proteinExistence type="inferred from homology"/>
<feature type="chain" id="PRO_1000124662" description="Probable manganese-dependent inorganic pyrophosphatase">
    <location>
        <begin position="1"/>
        <end position="311"/>
    </location>
</feature>
<feature type="binding site" evidence="1">
    <location>
        <position position="9"/>
    </location>
    <ligand>
        <name>Mn(2+)</name>
        <dbReference type="ChEBI" id="CHEBI:29035"/>
        <label>1</label>
    </ligand>
</feature>
<feature type="binding site" evidence="1">
    <location>
        <position position="13"/>
    </location>
    <ligand>
        <name>Mn(2+)</name>
        <dbReference type="ChEBI" id="CHEBI:29035"/>
        <label>1</label>
    </ligand>
</feature>
<feature type="binding site" evidence="1">
    <location>
        <position position="15"/>
    </location>
    <ligand>
        <name>Mn(2+)</name>
        <dbReference type="ChEBI" id="CHEBI:29035"/>
        <label>2</label>
    </ligand>
</feature>
<feature type="binding site" evidence="1">
    <location>
        <position position="77"/>
    </location>
    <ligand>
        <name>Mn(2+)</name>
        <dbReference type="ChEBI" id="CHEBI:29035"/>
        <label>1</label>
    </ligand>
</feature>
<feature type="binding site" evidence="1">
    <location>
        <position position="77"/>
    </location>
    <ligand>
        <name>Mn(2+)</name>
        <dbReference type="ChEBI" id="CHEBI:29035"/>
        <label>2</label>
    </ligand>
</feature>
<feature type="binding site" evidence="1">
    <location>
        <position position="99"/>
    </location>
    <ligand>
        <name>Mn(2+)</name>
        <dbReference type="ChEBI" id="CHEBI:29035"/>
        <label>2</label>
    </ligand>
</feature>
<feature type="binding site" evidence="1">
    <location>
        <position position="151"/>
    </location>
    <ligand>
        <name>Mn(2+)</name>
        <dbReference type="ChEBI" id="CHEBI:29035"/>
        <label>2</label>
    </ligand>
</feature>